<proteinExistence type="inferred from homology"/>
<dbReference type="EMBL" id="AP006861">
    <property type="protein sequence ID" value="BAE81678.1"/>
    <property type="molecule type" value="Genomic_DNA"/>
</dbReference>
<dbReference type="RefSeq" id="WP_011458451.1">
    <property type="nucleotide sequence ID" value="NC_007899.1"/>
</dbReference>
<dbReference type="SMR" id="Q252W0"/>
<dbReference type="STRING" id="264202.CF0906"/>
<dbReference type="KEGG" id="cfe:CF0906"/>
<dbReference type="eggNOG" id="COG0197">
    <property type="taxonomic scope" value="Bacteria"/>
</dbReference>
<dbReference type="HOGENOM" id="CLU_078858_2_1_0"/>
<dbReference type="OrthoDB" id="9802589at2"/>
<dbReference type="Proteomes" id="UP000001260">
    <property type="component" value="Chromosome"/>
</dbReference>
<dbReference type="GO" id="GO:0022625">
    <property type="term" value="C:cytosolic large ribosomal subunit"/>
    <property type="evidence" value="ECO:0007669"/>
    <property type="project" value="TreeGrafter"/>
</dbReference>
<dbReference type="GO" id="GO:0019843">
    <property type="term" value="F:rRNA binding"/>
    <property type="evidence" value="ECO:0007669"/>
    <property type="project" value="UniProtKB-UniRule"/>
</dbReference>
<dbReference type="GO" id="GO:0003735">
    <property type="term" value="F:structural constituent of ribosome"/>
    <property type="evidence" value="ECO:0007669"/>
    <property type="project" value="InterPro"/>
</dbReference>
<dbReference type="GO" id="GO:0000049">
    <property type="term" value="F:tRNA binding"/>
    <property type="evidence" value="ECO:0007669"/>
    <property type="project" value="UniProtKB-KW"/>
</dbReference>
<dbReference type="GO" id="GO:0006412">
    <property type="term" value="P:translation"/>
    <property type="evidence" value="ECO:0007669"/>
    <property type="project" value="UniProtKB-UniRule"/>
</dbReference>
<dbReference type="CDD" id="cd01433">
    <property type="entry name" value="Ribosomal_L16_L10e"/>
    <property type="match status" value="1"/>
</dbReference>
<dbReference type="FunFam" id="3.90.1170.10:FF:000001">
    <property type="entry name" value="50S ribosomal protein L16"/>
    <property type="match status" value="1"/>
</dbReference>
<dbReference type="Gene3D" id="3.90.1170.10">
    <property type="entry name" value="Ribosomal protein L10e/L16"/>
    <property type="match status" value="1"/>
</dbReference>
<dbReference type="HAMAP" id="MF_01342">
    <property type="entry name" value="Ribosomal_uL16"/>
    <property type="match status" value="1"/>
</dbReference>
<dbReference type="InterPro" id="IPR047873">
    <property type="entry name" value="Ribosomal_uL16"/>
</dbReference>
<dbReference type="InterPro" id="IPR000114">
    <property type="entry name" value="Ribosomal_uL16_bact-type"/>
</dbReference>
<dbReference type="InterPro" id="IPR020798">
    <property type="entry name" value="Ribosomal_uL16_CS"/>
</dbReference>
<dbReference type="InterPro" id="IPR016180">
    <property type="entry name" value="Ribosomal_uL16_dom"/>
</dbReference>
<dbReference type="InterPro" id="IPR036920">
    <property type="entry name" value="Ribosomal_uL16_sf"/>
</dbReference>
<dbReference type="NCBIfam" id="TIGR01164">
    <property type="entry name" value="rplP_bact"/>
    <property type="match status" value="1"/>
</dbReference>
<dbReference type="PANTHER" id="PTHR12220">
    <property type="entry name" value="50S/60S RIBOSOMAL PROTEIN L16"/>
    <property type="match status" value="1"/>
</dbReference>
<dbReference type="PANTHER" id="PTHR12220:SF13">
    <property type="entry name" value="LARGE RIBOSOMAL SUBUNIT PROTEIN UL16M"/>
    <property type="match status" value="1"/>
</dbReference>
<dbReference type="Pfam" id="PF00252">
    <property type="entry name" value="Ribosomal_L16"/>
    <property type="match status" value="1"/>
</dbReference>
<dbReference type="PRINTS" id="PR00060">
    <property type="entry name" value="RIBOSOMALL16"/>
</dbReference>
<dbReference type="SUPFAM" id="SSF54686">
    <property type="entry name" value="Ribosomal protein L16p/L10e"/>
    <property type="match status" value="1"/>
</dbReference>
<dbReference type="PROSITE" id="PS00586">
    <property type="entry name" value="RIBOSOMAL_L16_1"/>
    <property type="match status" value="1"/>
</dbReference>
<dbReference type="PROSITE" id="PS00701">
    <property type="entry name" value="RIBOSOMAL_L16_2"/>
    <property type="match status" value="1"/>
</dbReference>
<accession>Q252W0</accession>
<protein>
    <recommendedName>
        <fullName evidence="1">Large ribosomal subunit protein uL16</fullName>
    </recommendedName>
    <alternativeName>
        <fullName evidence="2">50S ribosomal protein L16</fullName>
    </alternativeName>
</protein>
<reference key="1">
    <citation type="journal article" date="2006" name="DNA Res.">
        <title>Genome sequence of the cat pathogen, Chlamydophila felis.</title>
        <authorList>
            <person name="Azuma Y."/>
            <person name="Hirakawa H."/>
            <person name="Yamashita A."/>
            <person name="Cai Y."/>
            <person name="Rahman M.A."/>
            <person name="Suzuki H."/>
            <person name="Mitaku S."/>
            <person name="Toh H."/>
            <person name="Goto S."/>
            <person name="Murakami T."/>
            <person name="Sugi K."/>
            <person name="Hayashi H."/>
            <person name="Fukushi H."/>
            <person name="Hattori M."/>
            <person name="Kuhara S."/>
            <person name="Shirai M."/>
        </authorList>
    </citation>
    <scope>NUCLEOTIDE SEQUENCE [LARGE SCALE GENOMIC DNA]</scope>
    <source>
        <strain>Fe/C-56</strain>
    </source>
</reference>
<gene>
    <name evidence="1" type="primary">rplP</name>
    <name type="ordered locus">CF0906</name>
</gene>
<keyword id="KW-0687">Ribonucleoprotein</keyword>
<keyword id="KW-0689">Ribosomal protein</keyword>
<keyword id="KW-0694">RNA-binding</keyword>
<keyword id="KW-0699">rRNA-binding</keyword>
<keyword id="KW-0820">tRNA-binding</keyword>
<feature type="chain" id="PRO_0000251626" description="Large ribosomal subunit protein uL16">
    <location>
        <begin position="1"/>
        <end position="138"/>
    </location>
</feature>
<evidence type="ECO:0000255" key="1">
    <source>
        <dbReference type="HAMAP-Rule" id="MF_01342"/>
    </source>
</evidence>
<evidence type="ECO:0000305" key="2"/>
<organism>
    <name type="scientific">Chlamydia felis (strain Fe/C-56)</name>
    <name type="common">Chlamydophila felis</name>
    <dbReference type="NCBI Taxonomy" id="264202"/>
    <lineage>
        <taxon>Bacteria</taxon>
        <taxon>Pseudomonadati</taxon>
        <taxon>Chlamydiota</taxon>
        <taxon>Chlamydiia</taxon>
        <taxon>Chlamydiales</taxon>
        <taxon>Chlamydiaceae</taxon>
        <taxon>Chlamydia/Chlamydophila group</taxon>
        <taxon>Chlamydia</taxon>
    </lineage>
</organism>
<name>RL16_CHLFF</name>
<sequence>MLMPKRTKFRKQQKGQFAGLSKGATFIDFGEFGMQTLERGWVTSRQIEACRVAINRYLKRKGKVWIRVFPDKSVTKKPAETRMGKGKGAPDHWVAVVRPGRILFEVANVSKEDAQDALRRAAAKLGIRTRFVKRVERV</sequence>
<comment type="function">
    <text evidence="1">Binds 23S rRNA and is also seen to make contacts with the A and possibly P site tRNAs.</text>
</comment>
<comment type="subunit">
    <text evidence="1">Part of the 50S ribosomal subunit.</text>
</comment>
<comment type="similarity">
    <text evidence="1">Belongs to the universal ribosomal protein uL16 family.</text>
</comment>